<protein>
    <recommendedName>
        <fullName evidence="1">Small ribosomal subunit protein uS2</fullName>
    </recommendedName>
    <alternativeName>
        <fullName evidence="2">30S ribosomal protein S2</fullName>
    </alternativeName>
</protein>
<name>RS2_CLOB6</name>
<feature type="chain" id="PRO_1000204876" description="Small ribosomal subunit protein uS2">
    <location>
        <begin position="1"/>
        <end position="233"/>
    </location>
</feature>
<reference key="1">
    <citation type="submission" date="2008-05" db="EMBL/GenBank/DDBJ databases">
        <title>Genome sequence of Clostridium botulinum Ba4 strain 657.</title>
        <authorList>
            <person name="Shrivastava S."/>
            <person name="Brown J.L."/>
            <person name="Bruce D."/>
            <person name="Detter C."/>
            <person name="Munk C."/>
            <person name="Smith L.A."/>
            <person name="Smith T.J."/>
            <person name="Sutton G."/>
            <person name="Brettin T.S."/>
        </authorList>
    </citation>
    <scope>NUCLEOTIDE SEQUENCE [LARGE SCALE GENOMIC DNA]</scope>
    <source>
        <strain>657 / Type Ba4</strain>
    </source>
</reference>
<accession>C3L0D3</accession>
<comment type="similarity">
    <text evidence="1">Belongs to the universal ribosomal protein uS2 family.</text>
</comment>
<gene>
    <name evidence="1" type="primary">rpsB</name>
    <name type="ordered locus">CLJ_B2660</name>
</gene>
<proteinExistence type="inferred from homology"/>
<sequence length="233" mass="26396">MSVISMKQLLEAGVHFGHQTRRWNPKMAPYIFTERNGIYIIDLQKTVKKVEEAYNFLRSVAEEGKDVLFVGTKKQAQEAIEEEAKRSEMHFVNNRWLGGMLTNFTTITARINKLEELDKMEEDGTFEVLPKKEVIKLKNEREKLEKNLGGIRKLDANNVGAMFIVDPRKEKNAILEAKRLGIPVVAIVDTNCDPDEVDFVIPGNDDAIRAVRLIAAKMADAVLEGRQGEQLAE</sequence>
<organism>
    <name type="scientific">Clostridium botulinum (strain 657 / Type Ba4)</name>
    <dbReference type="NCBI Taxonomy" id="515621"/>
    <lineage>
        <taxon>Bacteria</taxon>
        <taxon>Bacillati</taxon>
        <taxon>Bacillota</taxon>
        <taxon>Clostridia</taxon>
        <taxon>Eubacteriales</taxon>
        <taxon>Clostridiaceae</taxon>
        <taxon>Clostridium</taxon>
    </lineage>
</organism>
<dbReference type="EMBL" id="CP001083">
    <property type="protein sequence ID" value="ACQ52756.1"/>
    <property type="molecule type" value="Genomic_DNA"/>
</dbReference>
<dbReference type="RefSeq" id="WP_003362578.1">
    <property type="nucleotide sequence ID" value="NC_012658.1"/>
</dbReference>
<dbReference type="SMR" id="C3L0D3"/>
<dbReference type="GeneID" id="5186690"/>
<dbReference type="KEGG" id="cbi:CLJ_B2660"/>
<dbReference type="HOGENOM" id="CLU_040318_1_2_9"/>
<dbReference type="Proteomes" id="UP000002333">
    <property type="component" value="Chromosome"/>
</dbReference>
<dbReference type="GO" id="GO:0022627">
    <property type="term" value="C:cytosolic small ribosomal subunit"/>
    <property type="evidence" value="ECO:0007669"/>
    <property type="project" value="TreeGrafter"/>
</dbReference>
<dbReference type="GO" id="GO:0003735">
    <property type="term" value="F:structural constituent of ribosome"/>
    <property type="evidence" value="ECO:0007669"/>
    <property type="project" value="InterPro"/>
</dbReference>
<dbReference type="GO" id="GO:0006412">
    <property type="term" value="P:translation"/>
    <property type="evidence" value="ECO:0007669"/>
    <property type="project" value="UniProtKB-UniRule"/>
</dbReference>
<dbReference type="CDD" id="cd01425">
    <property type="entry name" value="RPS2"/>
    <property type="match status" value="1"/>
</dbReference>
<dbReference type="FunFam" id="1.10.287.610:FF:000001">
    <property type="entry name" value="30S ribosomal protein S2"/>
    <property type="match status" value="1"/>
</dbReference>
<dbReference type="Gene3D" id="3.40.50.10490">
    <property type="entry name" value="Glucose-6-phosphate isomerase like protein, domain 1"/>
    <property type="match status" value="1"/>
</dbReference>
<dbReference type="Gene3D" id="1.10.287.610">
    <property type="entry name" value="Helix hairpin bin"/>
    <property type="match status" value="1"/>
</dbReference>
<dbReference type="HAMAP" id="MF_00291_B">
    <property type="entry name" value="Ribosomal_uS2_B"/>
    <property type="match status" value="1"/>
</dbReference>
<dbReference type="InterPro" id="IPR001865">
    <property type="entry name" value="Ribosomal_uS2"/>
</dbReference>
<dbReference type="InterPro" id="IPR005706">
    <property type="entry name" value="Ribosomal_uS2_bac/mit/plastid"/>
</dbReference>
<dbReference type="InterPro" id="IPR018130">
    <property type="entry name" value="Ribosomal_uS2_CS"/>
</dbReference>
<dbReference type="InterPro" id="IPR023591">
    <property type="entry name" value="Ribosomal_uS2_flav_dom_sf"/>
</dbReference>
<dbReference type="NCBIfam" id="TIGR01011">
    <property type="entry name" value="rpsB_bact"/>
    <property type="match status" value="1"/>
</dbReference>
<dbReference type="PANTHER" id="PTHR12534">
    <property type="entry name" value="30S RIBOSOMAL PROTEIN S2 PROKARYOTIC AND ORGANELLAR"/>
    <property type="match status" value="1"/>
</dbReference>
<dbReference type="PANTHER" id="PTHR12534:SF0">
    <property type="entry name" value="SMALL RIBOSOMAL SUBUNIT PROTEIN US2M"/>
    <property type="match status" value="1"/>
</dbReference>
<dbReference type="Pfam" id="PF00318">
    <property type="entry name" value="Ribosomal_S2"/>
    <property type="match status" value="1"/>
</dbReference>
<dbReference type="PRINTS" id="PR00395">
    <property type="entry name" value="RIBOSOMALS2"/>
</dbReference>
<dbReference type="SUPFAM" id="SSF52313">
    <property type="entry name" value="Ribosomal protein S2"/>
    <property type="match status" value="1"/>
</dbReference>
<dbReference type="PROSITE" id="PS00962">
    <property type="entry name" value="RIBOSOMAL_S2_1"/>
    <property type="match status" value="1"/>
</dbReference>
<evidence type="ECO:0000255" key="1">
    <source>
        <dbReference type="HAMAP-Rule" id="MF_00291"/>
    </source>
</evidence>
<evidence type="ECO:0000305" key="2"/>
<keyword id="KW-0687">Ribonucleoprotein</keyword>
<keyword id="KW-0689">Ribosomal protein</keyword>